<protein>
    <recommendedName>
        <fullName evidence="1">Small ribosomal subunit protein bS21</fullName>
    </recommendedName>
    <alternativeName>
        <fullName evidence="3">30S ribosomal protein S21</fullName>
    </alternativeName>
</protein>
<evidence type="ECO:0000255" key="1">
    <source>
        <dbReference type="HAMAP-Rule" id="MF_00358"/>
    </source>
</evidence>
<evidence type="ECO:0000256" key="2">
    <source>
        <dbReference type="SAM" id="MobiDB-lite"/>
    </source>
</evidence>
<evidence type="ECO:0000305" key="3"/>
<dbReference type="EMBL" id="CP000860">
    <property type="protein sequence ID" value="ACA60541.1"/>
    <property type="molecule type" value="Genomic_DNA"/>
</dbReference>
<dbReference type="RefSeq" id="WP_012303116.1">
    <property type="nucleotide sequence ID" value="NC_010424.1"/>
</dbReference>
<dbReference type="SMR" id="B1I693"/>
<dbReference type="STRING" id="477974.Daud_2051"/>
<dbReference type="KEGG" id="dau:Daud_2051"/>
<dbReference type="eggNOG" id="COG0828">
    <property type="taxonomic scope" value="Bacteria"/>
</dbReference>
<dbReference type="HOGENOM" id="CLU_159258_1_2_9"/>
<dbReference type="OrthoDB" id="9799244at2"/>
<dbReference type="Proteomes" id="UP000008544">
    <property type="component" value="Chromosome"/>
</dbReference>
<dbReference type="GO" id="GO:1990904">
    <property type="term" value="C:ribonucleoprotein complex"/>
    <property type="evidence" value="ECO:0007669"/>
    <property type="project" value="UniProtKB-KW"/>
</dbReference>
<dbReference type="GO" id="GO:0005840">
    <property type="term" value="C:ribosome"/>
    <property type="evidence" value="ECO:0007669"/>
    <property type="project" value="UniProtKB-KW"/>
</dbReference>
<dbReference type="GO" id="GO:0003735">
    <property type="term" value="F:structural constituent of ribosome"/>
    <property type="evidence" value="ECO:0007669"/>
    <property type="project" value="InterPro"/>
</dbReference>
<dbReference type="GO" id="GO:0006412">
    <property type="term" value="P:translation"/>
    <property type="evidence" value="ECO:0007669"/>
    <property type="project" value="UniProtKB-UniRule"/>
</dbReference>
<dbReference type="Gene3D" id="1.20.5.1150">
    <property type="entry name" value="Ribosomal protein S8"/>
    <property type="match status" value="1"/>
</dbReference>
<dbReference type="HAMAP" id="MF_00358">
    <property type="entry name" value="Ribosomal_bS21"/>
    <property type="match status" value="1"/>
</dbReference>
<dbReference type="InterPro" id="IPR001911">
    <property type="entry name" value="Ribosomal_bS21"/>
</dbReference>
<dbReference type="InterPro" id="IPR018278">
    <property type="entry name" value="Ribosomal_bS21_CS"/>
</dbReference>
<dbReference type="InterPro" id="IPR038380">
    <property type="entry name" value="Ribosomal_bS21_sf"/>
</dbReference>
<dbReference type="NCBIfam" id="TIGR00030">
    <property type="entry name" value="S21p"/>
    <property type="match status" value="1"/>
</dbReference>
<dbReference type="PANTHER" id="PTHR21109">
    <property type="entry name" value="MITOCHONDRIAL 28S RIBOSOMAL PROTEIN S21"/>
    <property type="match status" value="1"/>
</dbReference>
<dbReference type="PANTHER" id="PTHR21109:SF22">
    <property type="entry name" value="SMALL RIBOSOMAL SUBUNIT PROTEIN BS21"/>
    <property type="match status" value="1"/>
</dbReference>
<dbReference type="Pfam" id="PF01165">
    <property type="entry name" value="Ribosomal_S21"/>
    <property type="match status" value="1"/>
</dbReference>
<dbReference type="PRINTS" id="PR00976">
    <property type="entry name" value="RIBOSOMALS21"/>
</dbReference>
<dbReference type="PROSITE" id="PS01181">
    <property type="entry name" value="RIBOSOMAL_S21"/>
    <property type="match status" value="1"/>
</dbReference>
<sequence>MAEVRVGKNETLDSALRRFKRTCQRAGVFAEARKHEHYEKPSVKRKKKSEAARRRKRSF</sequence>
<comment type="similarity">
    <text evidence="1">Belongs to the bacterial ribosomal protein bS21 family.</text>
</comment>
<proteinExistence type="inferred from homology"/>
<reference key="1">
    <citation type="submission" date="2007-10" db="EMBL/GenBank/DDBJ databases">
        <title>Complete sequence of chromosome of Desulforudis audaxviator MP104C.</title>
        <authorList>
            <person name="Copeland A."/>
            <person name="Lucas S."/>
            <person name="Lapidus A."/>
            <person name="Barry K."/>
            <person name="Glavina del Rio T."/>
            <person name="Dalin E."/>
            <person name="Tice H."/>
            <person name="Bruce D."/>
            <person name="Pitluck S."/>
            <person name="Lowry S.R."/>
            <person name="Larimer F."/>
            <person name="Land M.L."/>
            <person name="Hauser L."/>
            <person name="Kyrpides N."/>
            <person name="Ivanova N.N."/>
            <person name="Richardson P."/>
        </authorList>
    </citation>
    <scope>NUCLEOTIDE SEQUENCE [LARGE SCALE GENOMIC DNA]</scope>
    <source>
        <strain>MP104C</strain>
    </source>
</reference>
<accession>B1I693</accession>
<keyword id="KW-1185">Reference proteome</keyword>
<keyword id="KW-0687">Ribonucleoprotein</keyword>
<keyword id="KW-0689">Ribosomal protein</keyword>
<feature type="chain" id="PRO_1000120608" description="Small ribosomal subunit protein bS21">
    <location>
        <begin position="1"/>
        <end position="59"/>
    </location>
</feature>
<feature type="region of interest" description="Disordered" evidence="2">
    <location>
        <begin position="34"/>
        <end position="59"/>
    </location>
</feature>
<feature type="compositionally biased region" description="Basic residues" evidence="2">
    <location>
        <begin position="43"/>
        <end position="59"/>
    </location>
</feature>
<name>RS21_DESAP</name>
<gene>
    <name evidence="1" type="primary">rpsU</name>
    <name type="ordered locus">Daud_2051</name>
</gene>
<organism>
    <name type="scientific">Desulforudis audaxviator (strain MP104C)</name>
    <dbReference type="NCBI Taxonomy" id="477974"/>
    <lineage>
        <taxon>Bacteria</taxon>
        <taxon>Bacillati</taxon>
        <taxon>Bacillota</taxon>
        <taxon>Clostridia</taxon>
        <taxon>Thermoanaerobacterales</taxon>
        <taxon>Candidatus Desulforudaceae</taxon>
        <taxon>Candidatus Desulforudis</taxon>
    </lineage>
</organism>